<accession>Q3C1M3</accession>
<proteinExistence type="inferred from homology"/>
<organism>
    <name type="scientific">Nicotiana sylvestris</name>
    <name type="common">Wood tobacco</name>
    <name type="synonym">South American tobacco</name>
    <dbReference type="NCBI Taxonomy" id="4096"/>
    <lineage>
        <taxon>Eukaryota</taxon>
        <taxon>Viridiplantae</taxon>
        <taxon>Streptophyta</taxon>
        <taxon>Embryophyta</taxon>
        <taxon>Tracheophyta</taxon>
        <taxon>Spermatophyta</taxon>
        <taxon>Magnoliopsida</taxon>
        <taxon>eudicotyledons</taxon>
        <taxon>Gunneridae</taxon>
        <taxon>Pentapetalae</taxon>
        <taxon>asterids</taxon>
        <taxon>lamiids</taxon>
        <taxon>Solanales</taxon>
        <taxon>Solanaceae</taxon>
        <taxon>Nicotianoideae</taxon>
        <taxon>Nicotianeae</taxon>
        <taxon>Nicotiana</taxon>
    </lineage>
</organism>
<name>RPOA_NICSY</name>
<comment type="function">
    <text evidence="1">DNA-dependent RNA polymerase catalyzes the transcription of DNA into RNA using the four ribonucleoside triphosphates as substrates.</text>
</comment>
<comment type="catalytic activity">
    <reaction evidence="1">
        <text>RNA(n) + a ribonucleoside 5'-triphosphate = RNA(n+1) + diphosphate</text>
        <dbReference type="Rhea" id="RHEA:21248"/>
        <dbReference type="Rhea" id="RHEA-COMP:14527"/>
        <dbReference type="Rhea" id="RHEA-COMP:17342"/>
        <dbReference type="ChEBI" id="CHEBI:33019"/>
        <dbReference type="ChEBI" id="CHEBI:61557"/>
        <dbReference type="ChEBI" id="CHEBI:140395"/>
        <dbReference type="EC" id="2.7.7.6"/>
    </reaction>
</comment>
<comment type="subunit">
    <text evidence="1">In plastids the minimal PEP RNA polymerase catalytic core is composed of four subunits: alpha, beta, beta', and beta''. When a (nuclear-encoded) sigma factor is associated with the core the holoenzyme is formed, which can initiate transcription.</text>
</comment>
<comment type="subcellular location">
    <subcellularLocation>
        <location>Plastid</location>
        <location>Chloroplast</location>
    </subcellularLocation>
</comment>
<comment type="domain">
    <text evidence="1">The N-terminal domain is essential for RNAP assembly and basal transcription, whereas the C-terminal domain is involved in interaction with transcriptional regulators and with upstream promoter elements.</text>
</comment>
<comment type="similarity">
    <text evidence="1">Belongs to the RNA polymerase alpha chain family.</text>
</comment>
<feature type="chain" id="PRO_0000225923" description="DNA-directed RNA polymerase subunit alpha">
    <location>
        <begin position="1"/>
        <end position="337"/>
    </location>
</feature>
<feature type="region of interest" description="Alpha N-terminal domain (alpha-NTD)" evidence="1">
    <location>
        <begin position="1"/>
        <end position="233"/>
    </location>
</feature>
<feature type="region of interest" description="Alpha C-terminal domain (alpha-CTD)" evidence="1">
    <location>
        <begin position="265"/>
        <end position="337"/>
    </location>
</feature>
<keyword id="KW-0150">Chloroplast</keyword>
<keyword id="KW-0240">DNA-directed RNA polymerase</keyword>
<keyword id="KW-0548">Nucleotidyltransferase</keyword>
<keyword id="KW-0934">Plastid</keyword>
<keyword id="KW-1185">Reference proteome</keyword>
<keyword id="KW-0804">Transcription</keyword>
<keyword id="KW-0808">Transferase</keyword>
<dbReference type="EC" id="2.7.7.6" evidence="1"/>
<dbReference type="EMBL" id="AB237912">
    <property type="protein sequence ID" value="BAE46686.1"/>
    <property type="molecule type" value="Genomic_DNA"/>
</dbReference>
<dbReference type="RefSeq" id="YP_358710.1">
    <property type="nucleotide sequence ID" value="NC_007500.1"/>
</dbReference>
<dbReference type="SMR" id="Q3C1M3"/>
<dbReference type="GeneID" id="3735089"/>
<dbReference type="KEGG" id="nsy:3735089"/>
<dbReference type="OrthoDB" id="21306at4085"/>
<dbReference type="Proteomes" id="UP000189701">
    <property type="component" value="Chloroplast Pltd"/>
</dbReference>
<dbReference type="GO" id="GO:0009507">
    <property type="term" value="C:chloroplast"/>
    <property type="evidence" value="ECO:0007669"/>
    <property type="project" value="UniProtKB-SubCell"/>
</dbReference>
<dbReference type="GO" id="GO:0000428">
    <property type="term" value="C:DNA-directed RNA polymerase complex"/>
    <property type="evidence" value="ECO:0007669"/>
    <property type="project" value="UniProtKB-KW"/>
</dbReference>
<dbReference type="GO" id="GO:0005739">
    <property type="term" value="C:mitochondrion"/>
    <property type="evidence" value="ECO:0007669"/>
    <property type="project" value="GOC"/>
</dbReference>
<dbReference type="GO" id="GO:0003677">
    <property type="term" value="F:DNA binding"/>
    <property type="evidence" value="ECO:0007669"/>
    <property type="project" value="UniProtKB-UniRule"/>
</dbReference>
<dbReference type="GO" id="GO:0003899">
    <property type="term" value="F:DNA-directed RNA polymerase activity"/>
    <property type="evidence" value="ECO:0007669"/>
    <property type="project" value="UniProtKB-UniRule"/>
</dbReference>
<dbReference type="GO" id="GO:0046983">
    <property type="term" value="F:protein dimerization activity"/>
    <property type="evidence" value="ECO:0007669"/>
    <property type="project" value="InterPro"/>
</dbReference>
<dbReference type="GO" id="GO:0006351">
    <property type="term" value="P:DNA-templated transcription"/>
    <property type="evidence" value="ECO:0007669"/>
    <property type="project" value="UniProtKB-UniRule"/>
</dbReference>
<dbReference type="CDD" id="cd06928">
    <property type="entry name" value="RNAP_alpha_NTD"/>
    <property type="match status" value="1"/>
</dbReference>
<dbReference type="FunFam" id="1.10.150.20:FF:000021">
    <property type="entry name" value="DNA-directed RNA polymerase subunit alpha"/>
    <property type="match status" value="1"/>
</dbReference>
<dbReference type="FunFam" id="2.170.120.12:FF:000001">
    <property type="entry name" value="DNA-directed RNA polymerase subunit alpha"/>
    <property type="match status" value="1"/>
</dbReference>
<dbReference type="FunFam" id="3.30.1360.10:FF:000039">
    <property type="entry name" value="DNA-directed RNA polymerase subunit alpha"/>
    <property type="match status" value="1"/>
</dbReference>
<dbReference type="Gene3D" id="1.10.150.20">
    <property type="entry name" value="5' to 3' exonuclease, C-terminal subdomain"/>
    <property type="match status" value="1"/>
</dbReference>
<dbReference type="Gene3D" id="2.170.120.12">
    <property type="entry name" value="DNA-directed RNA polymerase, insert domain"/>
    <property type="match status" value="1"/>
</dbReference>
<dbReference type="Gene3D" id="3.30.1360.10">
    <property type="entry name" value="RNA polymerase, RBP11-like subunit"/>
    <property type="match status" value="1"/>
</dbReference>
<dbReference type="HAMAP" id="MF_00059">
    <property type="entry name" value="RNApol_bact_RpoA"/>
    <property type="match status" value="1"/>
</dbReference>
<dbReference type="InterPro" id="IPR011262">
    <property type="entry name" value="DNA-dir_RNA_pol_insert"/>
</dbReference>
<dbReference type="InterPro" id="IPR011263">
    <property type="entry name" value="DNA-dir_RNA_pol_RpoA/D/Rpb3"/>
</dbReference>
<dbReference type="InterPro" id="IPR011773">
    <property type="entry name" value="DNA-dir_RpoA"/>
</dbReference>
<dbReference type="InterPro" id="IPR036603">
    <property type="entry name" value="RBP11-like"/>
</dbReference>
<dbReference type="InterPro" id="IPR011260">
    <property type="entry name" value="RNAP_asu_C"/>
</dbReference>
<dbReference type="InterPro" id="IPR036643">
    <property type="entry name" value="RNApol_insert_sf"/>
</dbReference>
<dbReference type="NCBIfam" id="TIGR02027">
    <property type="entry name" value="rpoA"/>
    <property type="match status" value="1"/>
</dbReference>
<dbReference type="Pfam" id="PF01000">
    <property type="entry name" value="RNA_pol_A_bac"/>
    <property type="match status" value="1"/>
</dbReference>
<dbReference type="Pfam" id="PF03118">
    <property type="entry name" value="RNA_pol_A_CTD"/>
    <property type="match status" value="1"/>
</dbReference>
<dbReference type="Pfam" id="PF01193">
    <property type="entry name" value="RNA_pol_L"/>
    <property type="match status" value="1"/>
</dbReference>
<dbReference type="SMART" id="SM00662">
    <property type="entry name" value="RPOLD"/>
    <property type="match status" value="1"/>
</dbReference>
<dbReference type="SUPFAM" id="SSF47789">
    <property type="entry name" value="C-terminal domain of RNA polymerase alpha subunit"/>
    <property type="match status" value="1"/>
</dbReference>
<dbReference type="SUPFAM" id="SSF56553">
    <property type="entry name" value="Insert subdomain of RNA polymerase alpha subunit"/>
    <property type="match status" value="1"/>
</dbReference>
<dbReference type="SUPFAM" id="SSF55257">
    <property type="entry name" value="RBP11-like subunits of RNA polymerase"/>
    <property type="match status" value="1"/>
</dbReference>
<gene>
    <name evidence="1" type="primary">rpoA</name>
</gene>
<sequence length="337" mass="38613">MVREKVTVSTRTLQWKCVESRTDSKRLYYGRFILSPLMKGQADTIGIAMRRALLGEIEGTCITRVKSEKVPHEYSTITGIQESVHEILMNLKEIILRSNLYGTSDASICVKGPGSVTAQDIILPPYVEIVDNTQHIASLTEPIDFCIGLQIERNRGYLIKTPHNFQDGSYPIDAVFMPVRNANHSIHSYGNGNEKQEILFLEIWTNGSLTPKEALHEASRNLIDLFIPFLHMEEDNLYLQDNQHTVPLSPFTFHDKLAKLIKNKKKIALKSIFIDQSELPSRIYNCLKMSNIYTLLDLLNNSQEDLMKIEHFRSEDVKRILGILEKYFVIDLAKNKF</sequence>
<geneLocation type="chloroplast"/>
<evidence type="ECO:0000255" key="1">
    <source>
        <dbReference type="HAMAP-Rule" id="MF_00059"/>
    </source>
</evidence>
<reference key="1">
    <citation type="journal article" date="2006" name="Mol. Genet. Genomics">
        <title>The chloroplast genome of Nicotiana sylvestris and Nicotiana tomentosiformis: complete sequencing confirms that the Nicotiana sylvestris progenitor is the maternal genome donor of Nicotiana tabacum.</title>
        <authorList>
            <person name="Yukawa M."/>
            <person name="Tsudzuki T."/>
            <person name="Sugiura M."/>
        </authorList>
    </citation>
    <scope>NUCLEOTIDE SEQUENCE [LARGE SCALE GENOMIC DNA]</scope>
</reference>
<protein>
    <recommendedName>
        <fullName evidence="1">DNA-directed RNA polymerase subunit alpha</fullName>
        <shortName evidence="1">PEP</shortName>
        <ecNumber evidence="1">2.7.7.6</ecNumber>
    </recommendedName>
    <alternativeName>
        <fullName evidence="1">Plastid-encoded RNA polymerase subunit alpha</fullName>
        <shortName evidence="1">RNA polymerase subunit alpha</shortName>
    </alternativeName>
</protein>